<proteinExistence type="evidence at transcript level"/>
<evidence type="ECO:0000250" key="1">
    <source>
        <dbReference type="UniProtKB" id="Q1W6C3"/>
    </source>
</evidence>
<evidence type="ECO:0000250" key="2">
    <source>
        <dbReference type="UniProtKB" id="Q922G7"/>
    </source>
</evidence>
<evidence type="ECO:0000255" key="3"/>
<evidence type="ECO:0000305" key="4"/>
<sequence>MATLSVKPSQRFQLPDWHTNSYLLSTNAQLQRDASHQIRQEARVLRNETNNQTIWDEHDNRTRLVERIDTVNRWKEMLDKCLTDLDAEIDALTQMKDSAGQNLQAKNLPLDVAIECLTLRESRRDIDVVKDPVEDELHKEVEVIEATKKALQQKVSQAFEHLCLLQEVRQQLNSDHRGKMETLEIDRGCLSLNLRSPNISLKVDPTRVPDGSTTLQQWDDFSQFNKDRGEAEMKAATELREAIALTIAETNNELEAQRVATEFAFRKRLREMEKVYSELKWQEKNTLEEIAELQEDIRHLEEDLRTKFLSLKLSHTRLEARTYRPNVELCRDQAQYGLTDEVHQLEATIAALKQKLAQAQDALDALYKHLARLQADIACKANSMLLDTKCMDTRRKLTVPAEKFVPEVDTFTRTTNSTLSPLKSCQLELA</sequence>
<feature type="chain" id="PRO_0000261168" description="Tektin-2">
    <location>
        <begin position="1"/>
        <end position="430"/>
    </location>
</feature>
<feature type="coiled-coil region" evidence="3">
    <location>
        <begin position="82"/>
        <end position="160"/>
    </location>
</feature>
<feature type="coiled-coil region" evidence="3">
    <location>
        <begin position="273"/>
        <end position="379"/>
    </location>
</feature>
<comment type="function">
    <text evidence="2">Microtubule inner protein (MIP) part of the dynein-decorated doublet microtubules (DMTs) in cilia and flagellar axoneme. Plays a key role in the assembly or attachment of the inner dynein arm to microtubules in sperm flagella and tracheal cilia. Forms filamentous polymers in the walls of ciliary and flagellar microtubules.</text>
</comment>
<comment type="subunit">
    <text evidence="2">Microtubule inner protein component of sperm flagellar doublet microtubules (By similarity). May interact with CCDC172 (By similarity).</text>
</comment>
<comment type="subcellular location">
    <subcellularLocation>
        <location evidence="2">Cytoplasm</location>
        <location evidence="2">Cytoskeleton</location>
        <location evidence="2">Cilium axoneme</location>
    </subcellularLocation>
    <subcellularLocation>
        <location evidence="2">Cytoplasm</location>
        <location evidence="2">Cytoskeleton</location>
        <location evidence="2">Flagellum axoneme</location>
    </subcellularLocation>
    <subcellularLocation>
        <location evidence="2">Cytoplasm</location>
        <location evidence="2">Cytoskeleton</location>
        <location evidence="2">Microtubule organizing center</location>
    </subcellularLocation>
    <text evidence="2">Colocalized with CCDC172 at the perinuclear region.</text>
</comment>
<comment type="PTM">
    <text evidence="1">Tyrosine phosphorylated.</text>
</comment>
<comment type="PTM">
    <text evidence="2">Ubiquitinated, leading to its degradation. Deubiquitinated by USP16, promoting its stability.</text>
</comment>
<comment type="similarity">
    <text evidence="4">Belongs to the tektin family.</text>
</comment>
<keyword id="KW-0966">Cell projection</keyword>
<keyword id="KW-0969">Cilium</keyword>
<keyword id="KW-0175">Coiled coil</keyword>
<keyword id="KW-0963">Cytoplasm</keyword>
<keyword id="KW-0206">Cytoskeleton</keyword>
<keyword id="KW-0282">Flagellum</keyword>
<keyword id="KW-0493">Microtubule</keyword>
<keyword id="KW-0597">Phosphoprotein</keyword>
<keyword id="KW-1185">Reference proteome</keyword>
<keyword id="KW-0832">Ubl conjugation</keyword>
<name>TEKT2_MACFA</name>
<organism>
    <name type="scientific">Macaca fascicularis</name>
    <name type="common">Crab-eating macaque</name>
    <name type="synonym">Cynomolgus monkey</name>
    <dbReference type="NCBI Taxonomy" id="9541"/>
    <lineage>
        <taxon>Eukaryota</taxon>
        <taxon>Metazoa</taxon>
        <taxon>Chordata</taxon>
        <taxon>Craniata</taxon>
        <taxon>Vertebrata</taxon>
        <taxon>Euteleostomi</taxon>
        <taxon>Mammalia</taxon>
        <taxon>Eutheria</taxon>
        <taxon>Euarchontoglires</taxon>
        <taxon>Primates</taxon>
        <taxon>Haplorrhini</taxon>
        <taxon>Catarrhini</taxon>
        <taxon>Cercopithecidae</taxon>
        <taxon>Cercopithecinae</taxon>
        <taxon>Macaca</taxon>
    </lineage>
</organism>
<accession>Q4R5V1</accession>
<reference key="1">
    <citation type="submission" date="2005-06" db="EMBL/GenBank/DDBJ databases">
        <title>DNA sequences of macaque genes expressed in brain or testis and its evolutionary implications.</title>
        <authorList>
            <consortium name="International consortium for macaque cDNA sequencing and analysis"/>
        </authorList>
    </citation>
    <scope>NUCLEOTIDE SEQUENCE [LARGE SCALE MRNA]</scope>
    <source>
        <tissue>Testis</tissue>
    </source>
</reference>
<protein>
    <recommendedName>
        <fullName>Tektin-2</fullName>
    </recommendedName>
</protein>
<gene>
    <name type="primary">TEKT2</name>
    <name type="ORF">QtsA-20636</name>
</gene>
<dbReference type="EMBL" id="AB169442">
    <property type="protein sequence ID" value="BAE01524.1"/>
    <property type="molecule type" value="mRNA"/>
</dbReference>
<dbReference type="RefSeq" id="NP_001271821.1">
    <property type="nucleotide sequence ID" value="NM_001284892.1"/>
</dbReference>
<dbReference type="SMR" id="Q4R5V1"/>
<dbReference type="STRING" id="9541.ENSMFAP00000034107"/>
<dbReference type="eggNOG" id="KOG2685">
    <property type="taxonomic scope" value="Eukaryota"/>
</dbReference>
<dbReference type="Proteomes" id="UP000233100">
    <property type="component" value="Unplaced"/>
</dbReference>
<dbReference type="GO" id="GO:0160111">
    <property type="term" value="C:axonemal A tubule inner sheath"/>
    <property type="evidence" value="ECO:0000250"/>
    <property type="project" value="UniProtKB"/>
</dbReference>
<dbReference type="GO" id="GO:0005879">
    <property type="term" value="C:axonemal microtubule"/>
    <property type="evidence" value="ECO:0000250"/>
    <property type="project" value="UniProtKB"/>
</dbReference>
<dbReference type="GO" id="GO:0005815">
    <property type="term" value="C:microtubule organizing center"/>
    <property type="evidence" value="ECO:0000250"/>
    <property type="project" value="UniProtKB"/>
</dbReference>
<dbReference type="GO" id="GO:0005634">
    <property type="term" value="C:nucleus"/>
    <property type="evidence" value="ECO:0007669"/>
    <property type="project" value="TreeGrafter"/>
</dbReference>
<dbReference type="GO" id="GO:0036126">
    <property type="term" value="C:sperm flagellum"/>
    <property type="evidence" value="ECO:0000250"/>
    <property type="project" value="UniProtKB"/>
</dbReference>
<dbReference type="GO" id="GO:0060271">
    <property type="term" value="P:cilium assembly"/>
    <property type="evidence" value="ECO:0007669"/>
    <property type="project" value="TreeGrafter"/>
</dbReference>
<dbReference type="GO" id="GO:0030317">
    <property type="term" value="P:flagellated sperm motility"/>
    <property type="evidence" value="ECO:0000250"/>
    <property type="project" value="UniProtKB"/>
</dbReference>
<dbReference type="InterPro" id="IPR048256">
    <property type="entry name" value="Tektin-like"/>
</dbReference>
<dbReference type="InterPro" id="IPR000435">
    <property type="entry name" value="Tektins"/>
</dbReference>
<dbReference type="PANTHER" id="PTHR19960">
    <property type="entry name" value="TEKTIN"/>
    <property type="match status" value="1"/>
</dbReference>
<dbReference type="PANTHER" id="PTHR19960:SF29">
    <property type="entry name" value="TEKTIN-2"/>
    <property type="match status" value="1"/>
</dbReference>
<dbReference type="Pfam" id="PF03148">
    <property type="entry name" value="Tektin"/>
    <property type="match status" value="1"/>
</dbReference>
<dbReference type="PRINTS" id="PR00511">
    <property type="entry name" value="TEKTIN"/>
</dbReference>